<evidence type="ECO:0000255" key="1">
    <source>
        <dbReference type="HAMAP-Rule" id="MF_00023"/>
    </source>
</evidence>
<evidence type="ECO:0000256" key="2">
    <source>
        <dbReference type="SAM" id="MobiDB-lite"/>
    </source>
</evidence>
<organism>
    <name type="scientific">Xylella fastidiosa (strain 9a5c)</name>
    <dbReference type="NCBI Taxonomy" id="160492"/>
    <lineage>
        <taxon>Bacteria</taxon>
        <taxon>Pseudomonadati</taxon>
        <taxon>Pseudomonadota</taxon>
        <taxon>Gammaproteobacteria</taxon>
        <taxon>Lysobacterales</taxon>
        <taxon>Lysobacteraceae</taxon>
        <taxon>Xylella</taxon>
    </lineage>
</organism>
<proteinExistence type="inferred from homology"/>
<feature type="chain" id="PRO_0000103074" description="SsrA-binding protein">
    <location>
        <begin position="1"/>
        <end position="167"/>
    </location>
</feature>
<feature type="region of interest" description="Disordered" evidence="2">
    <location>
        <begin position="139"/>
        <end position="167"/>
    </location>
</feature>
<feature type="compositionally biased region" description="Basic and acidic residues" evidence="2">
    <location>
        <begin position="144"/>
        <end position="158"/>
    </location>
</feature>
<comment type="function">
    <text evidence="1">Required for rescue of stalled ribosomes mediated by trans-translation. Binds to transfer-messenger RNA (tmRNA), required for stable association of tmRNA with ribosomes. tmRNA and SmpB together mimic tRNA shape, replacing the anticodon stem-loop with SmpB. tmRNA is encoded by the ssrA gene; the 2 termini fold to resemble tRNA(Ala) and it encodes a 'tag peptide', a short internal open reading frame. During trans-translation Ala-aminoacylated tmRNA acts like a tRNA, entering the A-site of stalled ribosomes, displacing the stalled mRNA. The ribosome then switches to translate the ORF on the tmRNA; the nascent peptide is terminated with the 'tag peptide' encoded by the tmRNA and targeted for degradation. The ribosome is freed to recommence translation, which seems to be the essential function of trans-translation.</text>
</comment>
<comment type="subcellular location">
    <subcellularLocation>
        <location evidence="1">Cytoplasm</location>
    </subcellularLocation>
    <text evidence="1">The tmRNA-SmpB complex associates with stalled 70S ribosomes.</text>
</comment>
<comment type="similarity">
    <text evidence="1">Belongs to the SmpB family.</text>
</comment>
<reference key="1">
    <citation type="journal article" date="2000" name="Nature">
        <title>The genome sequence of the plant pathogen Xylella fastidiosa.</title>
        <authorList>
            <person name="Simpson A.J.G."/>
            <person name="Reinach F.C."/>
            <person name="Arruda P."/>
            <person name="Abreu F.A."/>
            <person name="Acencio M."/>
            <person name="Alvarenga R."/>
            <person name="Alves L.M.C."/>
            <person name="Araya J.E."/>
            <person name="Baia G.S."/>
            <person name="Baptista C.S."/>
            <person name="Barros M.H."/>
            <person name="Bonaccorsi E.D."/>
            <person name="Bordin S."/>
            <person name="Bove J.M."/>
            <person name="Briones M.R.S."/>
            <person name="Bueno M.R.P."/>
            <person name="Camargo A.A."/>
            <person name="Camargo L.E.A."/>
            <person name="Carraro D.M."/>
            <person name="Carrer H."/>
            <person name="Colauto N.B."/>
            <person name="Colombo C."/>
            <person name="Costa F.F."/>
            <person name="Costa M.C.R."/>
            <person name="Costa-Neto C.M."/>
            <person name="Coutinho L.L."/>
            <person name="Cristofani M."/>
            <person name="Dias-Neto E."/>
            <person name="Docena C."/>
            <person name="El-Dorry H."/>
            <person name="Facincani A.P."/>
            <person name="Ferreira A.J.S."/>
            <person name="Ferreira V.C.A."/>
            <person name="Ferro J.A."/>
            <person name="Fraga J.S."/>
            <person name="Franca S.C."/>
            <person name="Franco M.C."/>
            <person name="Frohme M."/>
            <person name="Furlan L.R."/>
            <person name="Garnier M."/>
            <person name="Goldman G.H."/>
            <person name="Goldman M.H.S."/>
            <person name="Gomes S.L."/>
            <person name="Gruber A."/>
            <person name="Ho P.L."/>
            <person name="Hoheisel J.D."/>
            <person name="Junqueira M.L."/>
            <person name="Kemper E.L."/>
            <person name="Kitajima J.P."/>
            <person name="Krieger J.E."/>
            <person name="Kuramae E.E."/>
            <person name="Laigret F."/>
            <person name="Lambais M.R."/>
            <person name="Leite L.C.C."/>
            <person name="Lemos E.G.M."/>
            <person name="Lemos M.V.F."/>
            <person name="Lopes S.A."/>
            <person name="Lopes C.R."/>
            <person name="Machado J.A."/>
            <person name="Machado M.A."/>
            <person name="Madeira A.M.B.N."/>
            <person name="Madeira H.M.F."/>
            <person name="Marino C.L."/>
            <person name="Marques M.V."/>
            <person name="Martins E.A.L."/>
            <person name="Martins E.M.F."/>
            <person name="Matsukuma A.Y."/>
            <person name="Menck C.F.M."/>
            <person name="Miracca E.C."/>
            <person name="Miyaki C.Y."/>
            <person name="Monteiro-Vitorello C.B."/>
            <person name="Moon D.H."/>
            <person name="Nagai M.A."/>
            <person name="Nascimento A.L.T.O."/>
            <person name="Netto L.E.S."/>
            <person name="Nhani A. Jr."/>
            <person name="Nobrega F.G."/>
            <person name="Nunes L.R."/>
            <person name="Oliveira M.A."/>
            <person name="de Oliveira M.C."/>
            <person name="de Oliveira R.C."/>
            <person name="Palmieri D.A."/>
            <person name="Paris A."/>
            <person name="Peixoto B.R."/>
            <person name="Pereira G.A.G."/>
            <person name="Pereira H.A. Jr."/>
            <person name="Pesquero J.B."/>
            <person name="Quaggio R.B."/>
            <person name="Roberto P.G."/>
            <person name="Rodrigues V."/>
            <person name="de Rosa A.J.M."/>
            <person name="de Rosa V.E. Jr."/>
            <person name="de Sa R.G."/>
            <person name="Santelli R.V."/>
            <person name="Sawasaki H.E."/>
            <person name="da Silva A.C.R."/>
            <person name="da Silva A.M."/>
            <person name="da Silva F.R."/>
            <person name="Silva W.A. Jr."/>
            <person name="da Silveira J.F."/>
            <person name="Silvestri M.L.Z."/>
            <person name="Siqueira W.J."/>
            <person name="de Souza A.A."/>
            <person name="de Souza A.P."/>
            <person name="Terenzi M.F."/>
            <person name="Truffi D."/>
            <person name="Tsai S.M."/>
            <person name="Tsuhako M.H."/>
            <person name="Vallada H."/>
            <person name="Van Sluys M.A."/>
            <person name="Verjovski-Almeida S."/>
            <person name="Vettore A.L."/>
            <person name="Zago M.A."/>
            <person name="Zatz M."/>
            <person name="Meidanis J."/>
            <person name="Setubal J.C."/>
        </authorList>
    </citation>
    <scope>NUCLEOTIDE SEQUENCE [LARGE SCALE GENOMIC DNA]</scope>
    <source>
        <strain>9a5c</strain>
    </source>
</reference>
<protein>
    <recommendedName>
        <fullName evidence="1">SsrA-binding protein</fullName>
    </recommendedName>
    <alternativeName>
        <fullName evidence="1">Small protein B</fullName>
    </alternativeName>
</protein>
<dbReference type="EMBL" id="AE003849">
    <property type="protein sequence ID" value="AAF85147.1"/>
    <property type="molecule type" value="Genomic_DNA"/>
</dbReference>
<dbReference type="PIR" id="C82568">
    <property type="entry name" value="C82568"/>
</dbReference>
<dbReference type="RefSeq" id="WP_010894794.1">
    <property type="nucleotide sequence ID" value="NC_002488.3"/>
</dbReference>
<dbReference type="SMR" id="Q9PAZ7"/>
<dbReference type="STRING" id="160492.XF_2348"/>
<dbReference type="KEGG" id="xfa:XF_2348"/>
<dbReference type="eggNOG" id="COG0691">
    <property type="taxonomic scope" value="Bacteria"/>
</dbReference>
<dbReference type="HOGENOM" id="CLU_108953_3_0_6"/>
<dbReference type="Proteomes" id="UP000000812">
    <property type="component" value="Chromosome"/>
</dbReference>
<dbReference type="GO" id="GO:0005829">
    <property type="term" value="C:cytosol"/>
    <property type="evidence" value="ECO:0007669"/>
    <property type="project" value="TreeGrafter"/>
</dbReference>
<dbReference type="GO" id="GO:0003723">
    <property type="term" value="F:RNA binding"/>
    <property type="evidence" value="ECO:0007669"/>
    <property type="project" value="UniProtKB-UniRule"/>
</dbReference>
<dbReference type="GO" id="GO:0070929">
    <property type="term" value="P:trans-translation"/>
    <property type="evidence" value="ECO:0007669"/>
    <property type="project" value="UniProtKB-UniRule"/>
</dbReference>
<dbReference type="CDD" id="cd09294">
    <property type="entry name" value="SmpB"/>
    <property type="match status" value="1"/>
</dbReference>
<dbReference type="Gene3D" id="2.40.280.10">
    <property type="match status" value="1"/>
</dbReference>
<dbReference type="HAMAP" id="MF_00023">
    <property type="entry name" value="SmpB"/>
    <property type="match status" value="1"/>
</dbReference>
<dbReference type="InterPro" id="IPR023620">
    <property type="entry name" value="SmpB"/>
</dbReference>
<dbReference type="InterPro" id="IPR000037">
    <property type="entry name" value="SsrA-bd_prot"/>
</dbReference>
<dbReference type="InterPro" id="IPR020081">
    <property type="entry name" value="SsrA-bd_prot_CS"/>
</dbReference>
<dbReference type="NCBIfam" id="NF003843">
    <property type="entry name" value="PRK05422.1"/>
    <property type="match status" value="1"/>
</dbReference>
<dbReference type="NCBIfam" id="TIGR00086">
    <property type="entry name" value="smpB"/>
    <property type="match status" value="1"/>
</dbReference>
<dbReference type="PANTHER" id="PTHR30308:SF2">
    <property type="entry name" value="SSRA-BINDING PROTEIN"/>
    <property type="match status" value="1"/>
</dbReference>
<dbReference type="PANTHER" id="PTHR30308">
    <property type="entry name" value="TMRNA-BINDING COMPONENT OF TRANS-TRANSLATION TAGGING COMPLEX"/>
    <property type="match status" value="1"/>
</dbReference>
<dbReference type="Pfam" id="PF01668">
    <property type="entry name" value="SmpB"/>
    <property type="match status" value="1"/>
</dbReference>
<dbReference type="SUPFAM" id="SSF74982">
    <property type="entry name" value="Small protein B (SmpB)"/>
    <property type="match status" value="1"/>
</dbReference>
<dbReference type="PROSITE" id="PS01317">
    <property type="entry name" value="SSRP"/>
    <property type="match status" value="1"/>
</dbReference>
<accession>Q9PAZ7</accession>
<name>SSRP_XYLFA</name>
<sequence length="167" mass="19427">MNNKHPENKAKSTTTPKTIALNKRARHEYHLIERHEAGLELQGWEVKAIRAGRANLADGYAYVRDGEIFLIGAQITPLIQASTHVVANDRRTRKLLLHRRQIDTLIGRVQREGFTLVPTAMYWSKNRVKMEIALAKGKQAHDKRHAEKEREWQRDKQRIMRAHNRNA</sequence>
<keyword id="KW-0963">Cytoplasm</keyword>
<keyword id="KW-0694">RNA-binding</keyword>
<gene>
    <name evidence="1" type="primary">smpB</name>
    <name type="ordered locus">XF_2348</name>
</gene>